<reference key="1">
    <citation type="journal article" date="2006" name="J. Bacteriol.">
        <title>Pathogenomic sequence analysis of Bacillus cereus and Bacillus thuringiensis isolates closely related to Bacillus anthracis.</title>
        <authorList>
            <person name="Han C.S."/>
            <person name="Xie G."/>
            <person name="Challacombe J.F."/>
            <person name="Altherr M.R."/>
            <person name="Bhotika S.S."/>
            <person name="Bruce D."/>
            <person name="Campbell C.S."/>
            <person name="Campbell M.L."/>
            <person name="Chen J."/>
            <person name="Chertkov O."/>
            <person name="Cleland C."/>
            <person name="Dimitrijevic M."/>
            <person name="Doggett N.A."/>
            <person name="Fawcett J.J."/>
            <person name="Glavina T."/>
            <person name="Goodwin L.A."/>
            <person name="Hill K.K."/>
            <person name="Hitchcock P."/>
            <person name="Jackson P.J."/>
            <person name="Keim P."/>
            <person name="Kewalramani A.R."/>
            <person name="Longmire J."/>
            <person name="Lucas S."/>
            <person name="Malfatti S."/>
            <person name="McMurry K."/>
            <person name="Meincke L.J."/>
            <person name="Misra M."/>
            <person name="Moseman B.L."/>
            <person name="Mundt M."/>
            <person name="Munk A.C."/>
            <person name="Okinaka R.T."/>
            <person name="Parson-Quintana B."/>
            <person name="Reilly L.P."/>
            <person name="Richardson P."/>
            <person name="Robinson D.L."/>
            <person name="Rubin E."/>
            <person name="Saunders E."/>
            <person name="Tapia R."/>
            <person name="Tesmer J.G."/>
            <person name="Thayer N."/>
            <person name="Thompson L.S."/>
            <person name="Tice H."/>
            <person name="Ticknor L.O."/>
            <person name="Wills P.L."/>
            <person name="Brettin T.S."/>
            <person name="Gilna P."/>
        </authorList>
    </citation>
    <scope>NUCLEOTIDE SEQUENCE [LARGE SCALE GENOMIC DNA]</scope>
    <source>
        <strain>97-27</strain>
    </source>
</reference>
<name>AMPA_BACHK</name>
<gene>
    <name evidence="1" type="primary">pepA</name>
    <name type="ordered locus">BT9727_4633</name>
</gene>
<accession>Q6HBY2</accession>
<organism>
    <name type="scientific">Bacillus thuringiensis subsp. konkukian (strain 97-27)</name>
    <dbReference type="NCBI Taxonomy" id="281309"/>
    <lineage>
        <taxon>Bacteria</taxon>
        <taxon>Bacillati</taxon>
        <taxon>Bacillota</taxon>
        <taxon>Bacilli</taxon>
        <taxon>Bacillales</taxon>
        <taxon>Bacillaceae</taxon>
        <taxon>Bacillus</taxon>
        <taxon>Bacillus cereus group</taxon>
    </lineage>
</organism>
<comment type="function">
    <text evidence="1">Presumably involved in the processing and regular turnover of intracellular proteins. Catalyzes the removal of unsubstituted N-terminal amino acids from various peptides.</text>
</comment>
<comment type="catalytic activity">
    <reaction evidence="1">
        <text>Release of an N-terminal amino acid, Xaa-|-Yaa-, in which Xaa is preferably Leu, but may be other amino acids including Pro although not Arg or Lys, and Yaa may be Pro. Amino acid amides and methyl esters are also readily hydrolyzed, but rates on arylamides are exceedingly low.</text>
        <dbReference type="EC" id="3.4.11.1"/>
    </reaction>
</comment>
<comment type="catalytic activity">
    <reaction evidence="1">
        <text>Release of an N-terminal amino acid, preferentially leucine, but not glutamic or aspartic acids.</text>
        <dbReference type="EC" id="3.4.11.10"/>
    </reaction>
</comment>
<comment type="cofactor">
    <cofactor evidence="1">
        <name>Mn(2+)</name>
        <dbReference type="ChEBI" id="CHEBI:29035"/>
    </cofactor>
    <text evidence="1">Binds 2 manganese ions per subunit.</text>
</comment>
<comment type="subcellular location">
    <subcellularLocation>
        <location evidence="1">Cytoplasm</location>
    </subcellularLocation>
</comment>
<comment type="similarity">
    <text evidence="1">Belongs to the peptidase M17 family.</text>
</comment>
<evidence type="ECO:0000255" key="1">
    <source>
        <dbReference type="HAMAP-Rule" id="MF_00181"/>
    </source>
</evidence>
<proteinExistence type="inferred from homology"/>
<protein>
    <recommendedName>
        <fullName evidence="1">Probable cytosol aminopeptidase</fullName>
        <ecNumber evidence="1">3.4.11.1</ecNumber>
    </recommendedName>
    <alternativeName>
        <fullName evidence="1">Leucine aminopeptidase</fullName>
        <shortName evidence="1">LAP</shortName>
        <ecNumber evidence="1">3.4.11.10</ecNumber>
    </alternativeName>
    <alternativeName>
        <fullName evidence="1">Leucyl aminopeptidase</fullName>
    </alternativeName>
</protein>
<feature type="chain" id="PRO_0000165721" description="Probable cytosol aminopeptidase">
    <location>
        <begin position="1"/>
        <end position="494"/>
    </location>
</feature>
<feature type="active site" evidence="1">
    <location>
        <position position="272"/>
    </location>
</feature>
<feature type="active site" evidence="1">
    <location>
        <position position="346"/>
    </location>
</feature>
<feature type="binding site" evidence="1">
    <location>
        <position position="260"/>
    </location>
    <ligand>
        <name>Mn(2+)</name>
        <dbReference type="ChEBI" id="CHEBI:29035"/>
        <label>2</label>
    </ligand>
</feature>
<feature type="binding site" evidence="1">
    <location>
        <position position="265"/>
    </location>
    <ligand>
        <name>Mn(2+)</name>
        <dbReference type="ChEBI" id="CHEBI:29035"/>
        <label>1</label>
    </ligand>
</feature>
<feature type="binding site" evidence="1">
    <location>
        <position position="265"/>
    </location>
    <ligand>
        <name>Mn(2+)</name>
        <dbReference type="ChEBI" id="CHEBI:29035"/>
        <label>2</label>
    </ligand>
</feature>
<feature type="binding site" evidence="1">
    <location>
        <position position="283"/>
    </location>
    <ligand>
        <name>Mn(2+)</name>
        <dbReference type="ChEBI" id="CHEBI:29035"/>
        <label>2</label>
    </ligand>
</feature>
<feature type="binding site" evidence="1">
    <location>
        <position position="342"/>
    </location>
    <ligand>
        <name>Mn(2+)</name>
        <dbReference type="ChEBI" id="CHEBI:29035"/>
        <label>1</label>
    </ligand>
</feature>
<feature type="binding site" evidence="1">
    <location>
        <position position="344"/>
    </location>
    <ligand>
        <name>Mn(2+)</name>
        <dbReference type="ChEBI" id="CHEBI:29035"/>
        <label>1</label>
    </ligand>
</feature>
<feature type="binding site" evidence="1">
    <location>
        <position position="344"/>
    </location>
    <ligand>
        <name>Mn(2+)</name>
        <dbReference type="ChEBI" id="CHEBI:29035"/>
        <label>2</label>
    </ligand>
</feature>
<sequence>MFQVQKELASHEAVVVALFEEEKTSSFVQELDKAFEGQLQVLLEEKELSTKKKAISKVHSLGKTDVKRYYFVGLGKKESYTTETLRSALGKTFKTLQAAKVQDAAILLDSFVTEKLDAIDVAHIAAEVQGLGTYELQTYKSDKKDRVELEKFTAITAEDAQEIEAALTVGYVHGRATNSARTLVNMPPNVLTATKLAEYAVELAEKYDMDYKVLEKEEMEELGMGALLAVNQGSIEPPKMIALIYKGKEEWTDVIGFVGKGITYDTGGYSLKPREGMVGMKGDMGGAAAVLGAMEIIGELRPEQNVIAVIPSTDNVVSGTAFKPDDVITSMSGKTIEVLNTDAEGRLALADGITYAKKLGANYLIDVATLTGGVIVALGNHTTGAMTNNEELFEQVLEASMETDESIWQLPIFDRDKERVRNSKFADLNNSPGREGHAVMAGTFIGEFAEDTPWVHLDIAGTSESSGAHDLGPAGATGAMVRTLATLVERFGEE</sequence>
<dbReference type="EC" id="3.4.11.1" evidence="1"/>
<dbReference type="EC" id="3.4.11.10" evidence="1"/>
<dbReference type="EMBL" id="AE017355">
    <property type="protein sequence ID" value="AAT63193.1"/>
    <property type="molecule type" value="Genomic_DNA"/>
</dbReference>
<dbReference type="RefSeq" id="WP_000487984.1">
    <property type="nucleotide sequence ID" value="NC_005957.1"/>
</dbReference>
<dbReference type="RefSeq" id="YP_038944.1">
    <property type="nucleotide sequence ID" value="NC_005957.1"/>
</dbReference>
<dbReference type="SMR" id="Q6HBY2"/>
<dbReference type="MEROPS" id="M17.010"/>
<dbReference type="KEGG" id="btk:BT9727_4633"/>
<dbReference type="PATRIC" id="fig|281309.8.peg.4932"/>
<dbReference type="HOGENOM" id="CLU_013734_6_0_9"/>
<dbReference type="Proteomes" id="UP000001301">
    <property type="component" value="Chromosome"/>
</dbReference>
<dbReference type="GO" id="GO:0005737">
    <property type="term" value="C:cytoplasm"/>
    <property type="evidence" value="ECO:0007669"/>
    <property type="project" value="UniProtKB-SubCell"/>
</dbReference>
<dbReference type="GO" id="GO:0030145">
    <property type="term" value="F:manganese ion binding"/>
    <property type="evidence" value="ECO:0007669"/>
    <property type="project" value="UniProtKB-UniRule"/>
</dbReference>
<dbReference type="GO" id="GO:0070006">
    <property type="term" value="F:metalloaminopeptidase activity"/>
    <property type="evidence" value="ECO:0007669"/>
    <property type="project" value="InterPro"/>
</dbReference>
<dbReference type="GO" id="GO:0006508">
    <property type="term" value="P:proteolysis"/>
    <property type="evidence" value="ECO:0007669"/>
    <property type="project" value="UniProtKB-KW"/>
</dbReference>
<dbReference type="CDD" id="cd00433">
    <property type="entry name" value="Peptidase_M17"/>
    <property type="match status" value="1"/>
</dbReference>
<dbReference type="Gene3D" id="3.40.220.10">
    <property type="entry name" value="Leucine Aminopeptidase, subunit E, domain 1"/>
    <property type="match status" value="1"/>
</dbReference>
<dbReference type="Gene3D" id="3.40.630.10">
    <property type="entry name" value="Zn peptidases"/>
    <property type="match status" value="1"/>
</dbReference>
<dbReference type="HAMAP" id="MF_00181">
    <property type="entry name" value="Cytosol_peptidase_M17"/>
    <property type="match status" value="1"/>
</dbReference>
<dbReference type="InterPro" id="IPR011356">
    <property type="entry name" value="Leucine_aapep/pepB"/>
</dbReference>
<dbReference type="InterPro" id="IPR043472">
    <property type="entry name" value="Macro_dom-like"/>
</dbReference>
<dbReference type="InterPro" id="IPR000819">
    <property type="entry name" value="Peptidase_M17_C"/>
</dbReference>
<dbReference type="InterPro" id="IPR023042">
    <property type="entry name" value="Peptidase_M17_leu_NH2_pept"/>
</dbReference>
<dbReference type="InterPro" id="IPR008283">
    <property type="entry name" value="Peptidase_M17_N"/>
</dbReference>
<dbReference type="NCBIfam" id="NF002073">
    <property type="entry name" value="PRK00913.1-2"/>
    <property type="match status" value="1"/>
</dbReference>
<dbReference type="NCBIfam" id="NF002074">
    <property type="entry name" value="PRK00913.1-4"/>
    <property type="match status" value="1"/>
</dbReference>
<dbReference type="NCBIfam" id="NF002083">
    <property type="entry name" value="PRK00913.3-5"/>
    <property type="match status" value="1"/>
</dbReference>
<dbReference type="PANTHER" id="PTHR11963:SF23">
    <property type="entry name" value="CYTOSOL AMINOPEPTIDASE"/>
    <property type="match status" value="1"/>
</dbReference>
<dbReference type="PANTHER" id="PTHR11963">
    <property type="entry name" value="LEUCINE AMINOPEPTIDASE-RELATED"/>
    <property type="match status" value="1"/>
</dbReference>
<dbReference type="Pfam" id="PF00883">
    <property type="entry name" value="Peptidase_M17"/>
    <property type="match status" value="1"/>
</dbReference>
<dbReference type="Pfam" id="PF02789">
    <property type="entry name" value="Peptidase_M17_N"/>
    <property type="match status" value="1"/>
</dbReference>
<dbReference type="PRINTS" id="PR00481">
    <property type="entry name" value="LAMNOPPTDASE"/>
</dbReference>
<dbReference type="SUPFAM" id="SSF52949">
    <property type="entry name" value="Macro domain-like"/>
    <property type="match status" value="1"/>
</dbReference>
<dbReference type="SUPFAM" id="SSF53187">
    <property type="entry name" value="Zn-dependent exopeptidases"/>
    <property type="match status" value="1"/>
</dbReference>
<dbReference type="PROSITE" id="PS00631">
    <property type="entry name" value="CYTOSOL_AP"/>
    <property type="match status" value="1"/>
</dbReference>
<keyword id="KW-0031">Aminopeptidase</keyword>
<keyword id="KW-0963">Cytoplasm</keyword>
<keyword id="KW-0378">Hydrolase</keyword>
<keyword id="KW-0464">Manganese</keyword>
<keyword id="KW-0479">Metal-binding</keyword>
<keyword id="KW-0645">Protease</keyword>